<dbReference type="EC" id="2.3.3.13" evidence="1"/>
<dbReference type="EMBL" id="AE016853">
    <property type="protein sequence ID" value="AAO54965.1"/>
    <property type="status" value="ALT_INIT"/>
    <property type="molecule type" value="Genomic_DNA"/>
</dbReference>
<dbReference type="RefSeq" id="NP_791270.3">
    <property type="nucleotide sequence ID" value="NC_004578.1"/>
</dbReference>
<dbReference type="RefSeq" id="WP_003380623.1">
    <property type="nucleotide sequence ID" value="NC_004578.1"/>
</dbReference>
<dbReference type="SMR" id="Q886Y1"/>
<dbReference type="STRING" id="223283.PSPTO_1444"/>
<dbReference type="GeneID" id="61790065"/>
<dbReference type="KEGG" id="pst:PSPTO_1444"/>
<dbReference type="PATRIC" id="fig|223283.9.peg.1464"/>
<dbReference type="eggNOG" id="COG0119">
    <property type="taxonomic scope" value="Bacteria"/>
</dbReference>
<dbReference type="HOGENOM" id="CLU_004588_3_0_6"/>
<dbReference type="OrthoDB" id="9803573at2"/>
<dbReference type="UniPathway" id="UPA00048">
    <property type="reaction ID" value="UER00070"/>
</dbReference>
<dbReference type="Proteomes" id="UP000002515">
    <property type="component" value="Chromosome"/>
</dbReference>
<dbReference type="GO" id="GO:0005737">
    <property type="term" value="C:cytoplasm"/>
    <property type="evidence" value="ECO:0007669"/>
    <property type="project" value="UniProtKB-SubCell"/>
</dbReference>
<dbReference type="GO" id="GO:0003852">
    <property type="term" value="F:2-isopropylmalate synthase activity"/>
    <property type="evidence" value="ECO:0007669"/>
    <property type="project" value="UniProtKB-UniRule"/>
</dbReference>
<dbReference type="GO" id="GO:0003985">
    <property type="term" value="F:acetyl-CoA C-acetyltransferase activity"/>
    <property type="evidence" value="ECO:0007669"/>
    <property type="project" value="UniProtKB-UniRule"/>
</dbReference>
<dbReference type="GO" id="GO:0000287">
    <property type="term" value="F:magnesium ion binding"/>
    <property type="evidence" value="ECO:0007669"/>
    <property type="project" value="UniProtKB-UniRule"/>
</dbReference>
<dbReference type="GO" id="GO:0009098">
    <property type="term" value="P:L-leucine biosynthetic process"/>
    <property type="evidence" value="ECO:0007669"/>
    <property type="project" value="UniProtKB-UniRule"/>
</dbReference>
<dbReference type="CDD" id="cd07942">
    <property type="entry name" value="DRE_TIM_LeuA"/>
    <property type="match status" value="1"/>
</dbReference>
<dbReference type="FunFam" id="3.20.20.70:FF:000045">
    <property type="entry name" value="2-isopropylmalate synthase"/>
    <property type="match status" value="1"/>
</dbReference>
<dbReference type="Gene3D" id="3.30.160.270">
    <property type="match status" value="1"/>
</dbReference>
<dbReference type="Gene3D" id="3.20.20.70">
    <property type="entry name" value="Aldolase class I"/>
    <property type="match status" value="1"/>
</dbReference>
<dbReference type="HAMAP" id="MF_00572">
    <property type="entry name" value="LeuA_type2"/>
    <property type="match status" value="1"/>
</dbReference>
<dbReference type="InterPro" id="IPR013709">
    <property type="entry name" value="2-isopropylmalate_synth_dimer"/>
</dbReference>
<dbReference type="InterPro" id="IPR002034">
    <property type="entry name" value="AIPM/Hcit_synth_CS"/>
</dbReference>
<dbReference type="InterPro" id="IPR013785">
    <property type="entry name" value="Aldolase_TIM"/>
</dbReference>
<dbReference type="InterPro" id="IPR005668">
    <property type="entry name" value="IPM_Synthase"/>
</dbReference>
<dbReference type="InterPro" id="IPR054692">
    <property type="entry name" value="LeuA-like_post-cat"/>
</dbReference>
<dbReference type="InterPro" id="IPR036230">
    <property type="entry name" value="LeuA_allosteric_dom_sf"/>
</dbReference>
<dbReference type="InterPro" id="IPR039371">
    <property type="entry name" value="LeuA_N_DRE-TIM"/>
</dbReference>
<dbReference type="InterPro" id="IPR000891">
    <property type="entry name" value="PYR_CT"/>
</dbReference>
<dbReference type="NCBIfam" id="TIGR00970">
    <property type="entry name" value="leuA_yeast"/>
    <property type="match status" value="1"/>
</dbReference>
<dbReference type="NCBIfam" id="NF002991">
    <property type="entry name" value="PRK03739.1"/>
    <property type="match status" value="1"/>
</dbReference>
<dbReference type="PANTHER" id="PTHR46911">
    <property type="match status" value="1"/>
</dbReference>
<dbReference type="PANTHER" id="PTHR46911:SF1">
    <property type="entry name" value="2-ISOPROPYLMALATE SYNTHASE"/>
    <property type="match status" value="1"/>
</dbReference>
<dbReference type="Pfam" id="PF00682">
    <property type="entry name" value="HMGL-like"/>
    <property type="match status" value="1"/>
</dbReference>
<dbReference type="Pfam" id="PF22615">
    <property type="entry name" value="IPMS_D2"/>
    <property type="match status" value="1"/>
</dbReference>
<dbReference type="Pfam" id="PF08502">
    <property type="entry name" value="LeuA_dimer"/>
    <property type="match status" value="1"/>
</dbReference>
<dbReference type="SMART" id="SM00917">
    <property type="entry name" value="LeuA_dimer"/>
    <property type="match status" value="1"/>
</dbReference>
<dbReference type="SUPFAM" id="SSF110921">
    <property type="entry name" value="2-isopropylmalate synthase LeuA, allosteric (dimerisation) domain"/>
    <property type="match status" value="1"/>
</dbReference>
<dbReference type="SUPFAM" id="SSF51569">
    <property type="entry name" value="Aldolase"/>
    <property type="match status" value="1"/>
</dbReference>
<dbReference type="SUPFAM" id="SSF89000">
    <property type="entry name" value="post-HMGL domain-like"/>
    <property type="match status" value="1"/>
</dbReference>
<dbReference type="PROSITE" id="PS00815">
    <property type="entry name" value="AIPM_HOMOCIT_SYNTH_1"/>
    <property type="match status" value="1"/>
</dbReference>
<dbReference type="PROSITE" id="PS00816">
    <property type="entry name" value="AIPM_HOMOCIT_SYNTH_2"/>
    <property type="match status" value="1"/>
</dbReference>
<dbReference type="PROSITE" id="PS50991">
    <property type="entry name" value="PYR_CT"/>
    <property type="match status" value="1"/>
</dbReference>
<proteinExistence type="inferred from homology"/>
<feature type="chain" id="PRO_0000140439" description="2-isopropylmalate synthase">
    <location>
        <begin position="1"/>
        <end position="556"/>
    </location>
</feature>
<feature type="domain" description="Pyruvate carboxyltransferase" evidence="1">
    <location>
        <begin position="33"/>
        <end position="307"/>
    </location>
</feature>
<feature type="region of interest" description="Regulatory domain" evidence="1">
    <location>
        <begin position="439"/>
        <end position="556"/>
    </location>
</feature>
<feature type="binding site" evidence="1">
    <location>
        <position position="42"/>
    </location>
    <ligand>
        <name>Mg(2+)</name>
        <dbReference type="ChEBI" id="CHEBI:18420"/>
    </ligand>
</feature>
<feature type="binding site" evidence="1">
    <location>
        <position position="246"/>
    </location>
    <ligand>
        <name>Mg(2+)</name>
        <dbReference type="ChEBI" id="CHEBI:18420"/>
    </ligand>
</feature>
<feature type="binding site" evidence="1">
    <location>
        <position position="248"/>
    </location>
    <ligand>
        <name>Mg(2+)</name>
        <dbReference type="ChEBI" id="CHEBI:18420"/>
    </ligand>
</feature>
<feature type="binding site" evidence="1">
    <location>
        <position position="282"/>
    </location>
    <ligand>
        <name>Mg(2+)</name>
        <dbReference type="ChEBI" id="CHEBI:18420"/>
    </ligand>
</feature>
<name>LEU1_PSESM</name>
<protein>
    <recommendedName>
        <fullName evidence="1">2-isopropylmalate synthase</fullName>
        <ecNumber evidence="1">2.3.3.13</ecNumber>
    </recommendedName>
    <alternativeName>
        <fullName evidence="1">Alpha-IPM synthase</fullName>
    </alternativeName>
    <alternativeName>
        <fullName evidence="1">Alpha-isopropylmalate synthase</fullName>
    </alternativeName>
</protein>
<evidence type="ECO:0000255" key="1">
    <source>
        <dbReference type="HAMAP-Rule" id="MF_00572"/>
    </source>
</evidence>
<evidence type="ECO:0000305" key="2"/>
<sequence>MTMLNDPSKKYRAFPTIDLPDRTWPSKTIDAAPIWCSSDLRDGNQSLIEPMDSVKKLRFWKTLVSVGVKEIEASFPAASQTDFDFVRTLIEDGHIPDDTTIQVLTQAREDLIARTFESLRGAKKAIVHLYNATCPSFRRIVFNQDKAGVKEIAVNAAKLFVKYAAQQPETQWTFEYSPETFSATELEFAKEVCDAVIEVWNPTPENKVILNLPATVEVATPNIYADQIEWFGRHITRRDSVLISLHTHNDRGTGVAATELGLMAGADRVEGCLFGNGERTGNVDLVTVALNLYTQGINPELDFSDIDGVRKVVEECNQIPVHPRHPYVGDLVHTAFSGSHQDAIRKGFTQQKEGELWEVPYLPIDPADIGRSYEAVIRVNSQSGKGGIAYLLEQEYGISLPRRMQIEFSQVVQGETDRLGLEMTAEQIHALLRREYLQANTPYALISHRLQEENGNSAVDAEVHVDGETQHWRGKGKGALEALVAGLPVAVEIMDYNEHAIGSGTTAKAAAYIELRVNGDRAVHGVGIDENITTASFRALFSALNRSLSQAQAKAA</sequence>
<comment type="function">
    <text evidence="1">Catalyzes the condensation of the acetyl group of acetyl-CoA with 3-methyl-2-oxobutanoate (2-ketoisovalerate) to form 3-carboxy-3-hydroxy-4-methylpentanoate (2-isopropylmalate).</text>
</comment>
<comment type="catalytic activity">
    <reaction evidence="1">
        <text>3-methyl-2-oxobutanoate + acetyl-CoA + H2O = (2S)-2-isopropylmalate + CoA + H(+)</text>
        <dbReference type="Rhea" id="RHEA:21524"/>
        <dbReference type="ChEBI" id="CHEBI:1178"/>
        <dbReference type="ChEBI" id="CHEBI:11851"/>
        <dbReference type="ChEBI" id="CHEBI:15377"/>
        <dbReference type="ChEBI" id="CHEBI:15378"/>
        <dbReference type="ChEBI" id="CHEBI:57287"/>
        <dbReference type="ChEBI" id="CHEBI:57288"/>
        <dbReference type="EC" id="2.3.3.13"/>
    </reaction>
</comment>
<comment type="cofactor">
    <cofactor evidence="1">
        <name>Mg(2+)</name>
        <dbReference type="ChEBI" id="CHEBI:18420"/>
    </cofactor>
</comment>
<comment type="pathway">
    <text evidence="1">Amino-acid biosynthesis; L-leucine biosynthesis; L-leucine from 3-methyl-2-oxobutanoate: step 1/4.</text>
</comment>
<comment type="subunit">
    <text evidence="1">Homodimer.</text>
</comment>
<comment type="subcellular location">
    <subcellularLocation>
        <location evidence="1">Cytoplasm</location>
    </subcellularLocation>
</comment>
<comment type="similarity">
    <text evidence="1">Belongs to the alpha-IPM synthase/homocitrate synthase family. LeuA type 2 subfamily.</text>
</comment>
<comment type="sequence caution" evidence="2">
    <conflict type="erroneous initiation">
        <sequence resource="EMBL-CDS" id="AAO54965"/>
    </conflict>
    <text>Extended N-terminus.</text>
</comment>
<organism>
    <name type="scientific">Pseudomonas syringae pv. tomato (strain ATCC BAA-871 / DC3000)</name>
    <dbReference type="NCBI Taxonomy" id="223283"/>
    <lineage>
        <taxon>Bacteria</taxon>
        <taxon>Pseudomonadati</taxon>
        <taxon>Pseudomonadota</taxon>
        <taxon>Gammaproteobacteria</taxon>
        <taxon>Pseudomonadales</taxon>
        <taxon>Pseudomonadaceae</taxon>
        <taxon>Pseudomonas</taxon>
    </lineage>
</organism>
<gene>
    <name evidence="1" type="primary">leuA</name>
    <name type="ordered locus">PSPTO_1444</name>
</gene>
<keyword id="KW-0028">Amino-acid biosynthesis</keyword>
<keyword id="KW-0100">Branched-chain amino acid biosynthesis</keyword>
<keyword id="KW-0963">Cytoplasm</keyword>
<keyword id="KW-0432">Leucine biosynthesis</keyword>
<keyword id="KW-0460">Magnesium</keyword>
<keyword id="KW-0479">Metal-binding</keyword>
<keyword id="KW-1185">Reference proteome</keyword>
<keyword id="KW-0808">Transferase</keyword>
<accession>Q886Y1</accession>
<reference key="1">
    <citation type="journal article" date="2003" name="Proc. Natl. Acad. Sci. U.S.A.">
        <title>The complete genome sequence of the Arabidopsis and tomato pathogen Pseudomonas syringae pv. tomato DC3000.</title>
        <authorList>
            <person name="Buell C.R."/>
            <person name="Joardar V."/>
            <person name="Lindeberg M."/>
            <person name="Selengut J."/>
            <person name="Paulsen I.T."/>
            <person name="Gwinn M.L."/>
            <person name="Dodson R.J."/>
            <person name="DeBoy R.T."/>
            <person name="Durkin A.S."/>
            <person name="Kolonay J.F."/>
            <person name="Madupu R."/>
            <person name="Daugherty S.C."/>
            <person name="Brinkac L.M."/>
            <person name="Beanan M.J."/>
            <person name="Haft D.H."/>
            <person name="Nelson W.C."/>
            <person name="Davidsen T.M."/>
            <person name="Zafar N."/>
            <person name="Zhou L."/>
            <person name="Liu J."/>
            <person name="Yuan Q."/>
            <person name="Khouri H.M."/>
            <person name="Fedorova N.B."/>
            <person name="Tran B."/>
            <person name="Russell D."/>
            <person name="Berry K.J."/>
            <person name="Utterback T.R."/>
            <person name="Van Aken S.E."/>
            <person name="Feldblyum T.V."/>
            <person name="D'Ascenzo M."/>
            <person name="Deng W.-L."/>
            <person name="Ramos A.R."/>
            <person name="Alfano J.R."/>
            <person name="Cartinhour S."/>
            <person name="Chatterjee A.K."/>
            <person name="Delaney T.P."/>
            <person name="Lazarowitz S.G."/>
            <person name="Martin G.B."/>
            <person name="Schneider D.J."/>
            <person name="Tang X."/>
            <person name="Bender C.L."/>
            <person name="White O."/>
            <person name="Fraser C.M."/>
            <person name="Collmer A."/>
        </authorList>
    </citation>
    <scope>NUCLEOTIDE SEQUENCE [LARGE SCALE GENOMIC DNA]</scope>
    <source>
        <strain>ATCC BAA-871 / DC3000</strain>
    </source>
</reference>